<name>TSAD_HELHP</name>
<organism>
    <name type="scientific">Helicobacter hepaticus (strain ATCC 51449 / 3B1)</name>
    <dbReference type="NCBI Taxonomy" id="235279"/>
    <lineage>
        <taxon>Bacteria</taxon>
        <taxon>Pseudomonadati</taxon>
        <taxon>Campylobacterota</taxon>
        <taxon>Epsilonproteobacteria</taxon>
        <taxon>Campylobacterales</taxon>
        <taxon>Helicobacteraceae</taxon>
        <taxon>Helicobacter</taxon>
    </lineage>
</organism>
<protein>
    <recommendedName>
        <fullName evidence="1">tRNA N6-adenosine threonylcarbamoyltransferase</fullName>
        <ecNumber evidence="1">2.3.1.234</ecNumber>
    </recommendedName>
    <alternativeName>
        <fullName evidence="1">N6-L-threonylcarbamoyladenine synthase</fullName>
        <shortName evidence="1">t(6)A synthase</shortName>
    </alternativeName>
    <alternativeName>
        <fullName evidence="1">t(6)A37 threonylcarbamoyladenosine biosynthesis protein TsaD</fullName>
    </alternativeName>
    <alternativeName>
        <fullName evidence="1">tRNA threonylcarbamoyladenosine biosynthesis protein TsaD</fullName>
    </alternativeName>
</protein>
<gene>
    <name evidence="1" type="primary">tsaD</name>
    <name type="synonym">gcp</name>
    <name type="ordered locus">HH_1842</name>
</gene>
<reference key="1">
    <citation type="journal article" date="2003" name="Proc. Natl. Acad. Sci. U.S.A.">
        <title>The complete genome sequence of the carcinogenic bacterium Helicobacter hepaticus.</title>
        <authorList>
            <person name="Suerbaum S."/>
            <person name="Josenhans C."/>
            <person name="Sterzenbach T."/>
            <person name="Drescher B."/>
            <person name="Brandt P."/>
            <person name="Bell M."/>
            <person name="Droege M."/>
            <person name="Fartmann B."/>
            <person name="Fischer H.-P."/>
            <person name="Ge Z."/>
            <person name="Hoerster A."/>
            <person name="Holland R."/>
            <person name="Klein K."/>
            <person name="Koenig J."/>
            <person name="Macko L."/>
            <person name="Mendz G.L."/>
            <person name="Nyakatura G."/>
            <person name="Schauer D.B."/>
            <person name="Shen Z."/>
            <person name="Weber J."/>
            <person name="Frosch M."/>
            <person name="Fox J.G."/>
        </authorList>
    </citation>
    <scope>NUCLEOTIDE SEQUENCE [LARGE SCALE GENOMIC DNA]</scope>
    <source>
        <strain>ATCC 51449 / 3B1</strain>
    </source>
</reference>
<dbReference type="EC" id="2.3.1.234" evidence="1"/>
<dbReference type="EMBL" id="AE017125">
    <property type="protein sequence ID" value="AAP78439.1"/>
    <property type="molecule type" value="Genomic_DNA"/>
</dbReference>
<dbReference type="RefSeq" id="WP_011116681.1">
    <property type="nucleotide sequence ID" value="NC_004917.1"/>
</dbReference>
<dbReference type="SMR" id="Q7VF36"/>
<dbReference type="STRING" id="235279.HH_1842"/>
<dbReference type="KEGG" id="hhe:HH_1842"/>
<dbReference type="eggNOG" id="COG0533">
    <property type="taxonomic scope" value="Bacteria"/>
</dbReference>
<dbReference type="HOGENOM" id="CLU_023208_0_3_7"/>
<dbReference type="OrthoDB" id="9806197at2"/>
<dbReference type="Proteomes" id="UP000002495">
    <property type="component" value="Chromosome"/>
</dbReference>
<dbReference type="GO" id="GO:0005737">
    <property type="term" value="C:cytoplasm"/>
    <property type="evidence" value="ECO:0007669"/>
    <property type="project" value="UniProtKB-SubCell"/>
</dbReference>
<dbReference type="GO" id="GO:0005506">
    <property type="term" value="F:iron ion binding"/>
    <property type="evidence" value="ECO:0007669"/>
    <property type="project" value="UniProtKB-UniRule"/>
</dbReference>
<dbReference type="GO" id="GO:0061711">
    <property type="term" value="F:N(6)-L-threonylcarbamoyladenine synthase activity"/>
    <property type="evidence" value="ECO:0007669"/>
    <property type="project" value="UniProtKB-EC"/>
</dbReference>
<dbReference type="GO" id="GO:0002949">
    <property type="term" value="P:tRNA threonylcarbamoyladenosine modification"/>
    <property type="evidence" value="ECO:0007669"/>
    <property type="project" value="UniProtKB-UniRule"/>
</dbReference>
<dbReference type="Gene3D" id="3.30.420.40">
    <property type="match status" value="2"/>
</dbReference>
<dbReference type="HAMAP" id="MF_01445">
    <property type="entry name" value="TsaD"/>
    <property type="match status" value="1"/>
</dbReference>
<dbReference type="InterPro" id="IPR043129">
    <property type="entry name" value="ATPase_NBD"/>
</dbReference>
<dbReference type="InterPro" id="IPR000905">
    <property type="entry name" value="Gcp-like_dom"/>
</dbReference>
<dbReference type="InterPro" id="IPR017861">
    <property type="entry name" value="KAE1/TsaD"/>
</dbReference>
<dbReference type="InterPro" id="IPR017860">
    <property type="entry name" value="Peptidase_M22_CS"/>
</dbReference>
<dbReference type="InterPro" id="IPR022450">
    <property type="entry name" value="TsaD"/>
</dbReference>
<dbReference type="NCBIfam" id="TIGR00329">
    <property type="entry name" value="gcp_kae1"/>
    <property type="match status" value="1"/>
</dbReference>
<dbReference type="NCBIfam" id="TIGR03723">
    <property type="entry name" value="T6A_TsaD_YgjD"/>
    <property type="match status" value="1"/>
</dbReference>
<dbReference type="PANTHER" id="PTHR11735">
    <property type="entry name" value="TRNA N6-ADENOSINE THREONYLCARBAMOYLTRANSFERASE"/>
    <property type="match status" value="1"/>
</dbReference>
<dbReference type="PANTHER" id="PTHR11735:SF6">
    <property type="entry name" value="TRNA N6-ADENOSINE THREONYLCARBAMOYLTRANSFERASE, MITOCHONDRIAL"/>
    <property type="match status" value="1"/>
</dbReference>
<dbReference type="Pfam" id="PF00814">
    <property type="entry name" value="TsaD"/>
    <property type="match status" value="1"/>
</dbReference>
<dbReference type="PRINTS" id="PR00789">
    <property type="entry name" value="OSIALOPTASE"/>
</dbReference>
<dbReference type="SUPFAM" id="SSF53067">
    <property type="entry name" value="Actin-like ATPase domain"/>
    <property type="match status" value="1"/>
</dbReference>
<dbReference type="PROSITE" id="PS01016">
    <property type="entry name" value="GLYCOPROTEASE"/>
    <property type="match status" value="1"/>
</dbReference>
<comment type="function">
    <text evidence="1">Required for the formation of a threonylcarbamoyl group on adenosine at position 37 (t(6)A37) in tRNAs that read codons beginning with adenine. Is involved in the transfer of the threonylcarbamoyl moiety of threonylcarbamoyl-AMP (TC-AMP) to the N6 group of A37, together with TsaE and TsaB. TsaD likely plays a direct catalytic role in this reaction.</text>
</comment>
<comment type="catalytic activity">
    <reaction evidence="1">
        <text>L-threonylcarbamoyladenylate + adenosine(37) in tRNA = N(6)-L-threonylcarbamoyladenosine(37) in tRNA + AMP + H(+)</text>
        <dbReference type="Rhea" id="RHEA:37059"/>
        <dbReference type="Rhea" id="RHEA-COMP:10162"/>
        <dbReference type="Rhea" id="RHEA-COMP:10163"/>
        <dbReference type="ChEBI" id="CHEBI:15378"/>
        <dbReference type="ChEBI" id="CHEBI:73682"/>
        <dbReference type="ChEBI" id="CHEBI:74411"/>
        <dbReference type="ChEBI" id="CHEBI:74418"/>
        <dbReference type="ChEBI" id="CHEBI:456215"/>
        <dbReference type="EC" id="2.3.1.234"/>
    </reaction>
</comment>
<comment type="cofactor">
    <cofactor evidence="1">
        <name>Fe(2+)</name>
        <dbReference type="ChEBI" id="CHEBI:29033"/>
    </cofactor>
    <text evidence="1">Binds 1 Fe(2+) ion per subunit.</text>
</comment>
<comment type="subcellular location">
    <subcellularLocation>
        <location evidence="1">Cytoplasm</location>
    </subcellularLocation>
</comment>
<comment type="similarity">
    <text evidence="1">Belongs to the KAE1 / TsaD family.</text>
</comment>
<evidence type="ECO:0000255" key="1">
    <source>
        <dbReference type="HAMAP-Rule" id="MF_01445"/>
    </source>
</evidence>
<feature type="chain" id="PRO_0000303384" description="tRNA N6-adenosine threonylcarbamoyltransferase">
    <location>
        <begin position="1"/>
        <end position="358"/>
    </location>
</feature>
<feature type="binding site" evidence="1">
    <location>
        <position position="111"/>
    </location>
    <ligand>
        <name>Fe cation</name>
        <dbReference type="ChEBI" id="CHEBI:24875"/>
    </ligand>
</feature>
<feature type="binding site" evidence="1">
    <location>
        <position position="115"/>
    </location>
    <ligand>
        <name>Fe cation</name>
        <dbReference type="ChEBI" id="CHEBI:24875"/>
    </ligand>
</feature>
<feature type="binding site" evidence="1">
    <location>
        <begin position="146"/>
        <end position="150"/>
    </location>
    <ligand>
        <name>substrate</name>
    </ligand>
</feature>
<feature type="binding site" evidence="1">
    <location>
        <position position="179"/>
    </location>
    <ligand>
        <name>substrate</name>
    </ligand>
</feature>
<feature type="binding site" evidence="1">
    <location>
        <position position="192"/>
    </location>
    <ligand>
        <name>substrate</name>
    </ligand>
</feature>
<feature type="binding site" evidence="1">
    <location>
        <position position="294"/>
    </location>
    <ligand>
        <name>substrate</name>
    </ligand>
</feature>
<feature type="binding site" evidence="1">
    <location>
        <position position="322"/>
    </location>
    <ligand>
        <name>Fe cation</name>
        <dbReference type="ChEBI" id="CHEBI:24875"/>
    </ligand>
</feature>
<keyword id="KW-0012">Acyltransferase</keyword>
<keyword id="KW-0963">Cytoplasm</keyword>
<keyword id="KW-0408">Iron</keyword>
<keyword id="KW-0479">Metal-binding</keyword>
<keyword id="KW-1185">Reference proteome</keyword>
<keyword id="KW-0808">Transferase</keyword>
<keyword id="KW-0819">tRNA processing</keyword>
<proteinExistence type="inferred from homology"/>
<accession>Q7VF36</accession>
<sequence length="358" mass="39231">MILSIESSCDDSSLALMSINDASLLYHIKLSQDEEHSTYGGIVPEIASRLHAQRLPEILKKLKAFLNNDLSPIKAVAVTTRPGLSVTLIEGLMMAKALCLGLQVPLICVNHLKGHIYSLLIHKATSDMQAILPKNTSLPQPLGILLVSGGHTQILHMRDFNAISLIAQSLDDSFGESFDKVAKYLGLGYPGGPVIESYATTFMRDFPHIAPHSFPVPLLHNQKLQFSFSGLKNAVRLAIQALPQPLSLKDRGSICAGFQQSACEHIVRKVRLYFQSAQAQDLEHFAIVGGASANTYLRTTLNELCEEYNKQLHLADLAFCADNAAMIGVCAIEHYKRGDFTPIDEAQISPKSLLNDFL</sequence>